<proteinExistence type="inferred from homology"/>
<protein>
    <recommendedName>
        <fullName>ATP-dependent RNA helicase DHH1</fullName>
        <ecNumber>3.6.4.13</ecNumber>
    </recommendedName>
</protein>
<gene>
    <name type="primary">DHH1</name>
    <name type="ORF">MGG_03388</name>
</gene>
<keyword id="KW-0067">ATP-binding</keyword>
<keyword id="KW-0963">Cytoplasm</keyword>
<keyword id="KW-0347">Helicase</keyword>
<keyword id="KW-0378">Hydrolase</keyword>
<keyword id="KW-0507">mRNA processing</keyword>
<keyword id="KW-0509">mRNA transport</keyword>
<keyword id="KW-0547">Nucleotide-binding</keyword>
<keyword id="KW-1185">Reference proteome</keyword>
<keyword id="KW-0694">RNA-binding</keyword>
<keyword id="KW-0810">Translation regulation</keyword>
<keyword id="KW-0813">Transport</keyword>
<accession>A4R715</accession>
<accession>G4N8U3</accession>
<sequence>MADVLADQLRSATLSDATNNEDWRRNLNIPARDNRQQTEDVTNTKGLEFENFGLKRDLLMGIFEAGFEKPSPIQEESIPVALTGRDILARAKNGTGKTAAFVVPALETINPKVSKIQCLILVPTRELAMQTSQVCKTLGKHLGINVMVTTGGTTLRDDILRLQDPVHIVVGTPGRILDLAGKNVADLSECPMFIMDEADKLLSIEFTPVIEQLLQFHPKDRQVMLFSATFPISVKEFSDKNMTNPYEINLMDELTLRGITQYYAFVEEKQKVHCLNTLFSKLQINQSIIFCNSTNRVELLAKKITELGYSCFYSHAKMQQQARNRVFHDFRNGVCRNLVCSDLLTRGIDIQAVNVVINFDFPKNAETYLHRIGRSGRYGHLGLAINLISWEDRFNLYNIERDLGTEIQPIPSTIDKSLYVYDNPETIPRPINIPAQPSSAGNAQSAAPNQGPPPQQQRPHQGQENWQNQNGRHNGSSQQQQPRGPHQNRGRGGGRGRGGFQGQGQGQRNYNNNYRGGRGGHNQGQHQQQMPNQQS</sequence>
<comment type="function">
    <text evidence="1">ATP-dependent RNA helicase involved in mRNA turnover, and more specifically in mRNA decapping by activating the decapping enzyme DCP1. Is involved in G1/S DNA-damage checkpoint recovery, probably through the regulation of the translational status of a subset of mRNAs. May also have a role in translation and mRNA nuclear export (By similarity).</text>
</comment>
<comment type="catalytic activity">
    <reaction>
        <text>ATP + H2O = ADP + phosphate + H(+)</text>
        <dbReference type="Rhea" id="RHEA:13065"/>
        <dbReference type="ChEBI" id="CHEBI:15377"/>
        <dbReference type="ChEBI" id="CHEBI:15378"/>
        <dbReference type="ChEBI" id="CHEBI:30616"/>
        <dbReference type="ChEBI" id="CHEBI:43474"/>
        <dbReference type="ChEBI" id="CHEBI:456216"/>
        <dbReference type="EC" id="3.6.4.13"/>
    </reaction>
</comment>
<comment type="subcellular location">
    <subcellularLocation>
        <location evidence="1">Cytoplasm</location>
        <location evidence="1">P-body</location>
    </subcellularLocation>
    <text evidence="1">Is concentrated in several cytoplasmic foci called P bodies (or cytoplasmic processing bodies) which represent sites of mRNA decapping and 5' to 3' exonucleotidic decay.</text>
</comment>
<comment type="domain">
    <text>The Q motif is unique to and characteristic of the DEAD box family of RNA helicases and controls ATP binding and hydrolysis.</text>
</comment>
<comment type="similarity">
    <text evidence="5">Belongs to the DEAD box helicase family. DDX6/DHH1 subfamily.</text>
</comment>
<evidence type="ECO:0000250" key="1"/>
<evidence type="ECO:0000255" key="2">
    <source>
        <dbReference type="PROSITE-ProRule" id="PRU00541"/>
    </source>
</evidence>
<evidence type="ECO:0000255" key="3">
    <source>
        <dbReference type="PROSITE-ProRule" id="PRU00542"/>
    </source>
</evidence>
<evidence type="ECO:0000256" key="4">
    <source>
        <dbReference type="SAM" id="MobiDB-lite"/>
    </source>
</evidence>
<evidence type="ECO:0000305" key="5"/>
<dbReference type="EC" id="3.6.4.13"/>
<dbReference type="EMBL" id="CM001234">
    <property type="protein sequence ID" value="EHA50237.1"/>
    <property type="molecule type" value="Genomic_DNA"/>
</dbReference>
<dbReference type="RefSeq" id="XP_003716556.1">
    <property type="nucleotide sequence ID" value="XM_003716508.1"/>
</dbReference>
<dbReference type="SMR" id="A4R715"/>
<dbReference type="FunCoup" id="A4R715">
    <property type="interactions" value="1300"/>
</dbReference>
<dbReference type="STRING" id="242507.A4R715"/>
<dbReference type="EnsemblFungi" id="MGG_03388T0">
    <property type="protein sequence ID" value="MGG_03388T0"/>
    <property type="gene ID" value="MGG_03388"/>
</dbReference>
<dbReference type="GeneID" id="2676879"/>
<dbReference type="KEGG" id="mgr:MGG_03388"/>
<dbReference type="VEuPathDB" id="FungiDB:MGG_03388"/>
<dbReference type="eggNOG" id="KOG0326">
    <property type="taxonomic scope" value="Eukaryota"/>
</dbReference>
<dbReference type="HOGENOM" id="CLU_003041_30_0_1"/>
<dbReference type="InParanoid" id="A4R715"/>
<dbReference type="OMA" id="TYEDRHT"/>
<dbReference type="OrthoDB" id="10265785at2759"/>
<dbReference type="Proteomes" id="UP000009058">
    <property type="component" value="Chromosome 4"/>
</dbReference>
<dbReference type="GO" id="GO:0000932">
    <property type="term" value="C:P-body"/>
    <property type="evidence" value="ECO:0007669"/>
    <property type="project" value="UniProtKB-SubCell"/>
</dbReference>
<dbReference type="GO" id="GO:0005524">
    <property type="term" value="F:ATP binding"/>
    <property type="evidence" value="ECO:0007669"/>
    <property type="project" value="UniProtKB-KW"/>
</dbReference>
<dbReference type="GO" id="GO:0016887">
    <property type="term" value="F:ATP hydrolysis activity"/>
    <property type="evidence" value="ECO:0007669"/>
    <property type="project" value="RHEA"/>
</dbReference>
<dbReference type="GO" id="GO:0003723">
    <property type="term" value="F:RNA binding"/>
    <property type="evidence" value="ECO:0007669"/>
    <property type="project" value="UniProtKB-KW"/>
</dbReference>
<dbReference type="GO" id="GO:0003724">
    <property type="term" value="F:RNA helicase activity"/>
    <property type="evidence" value="ECO:0007669"/>
    <property type="project" value="UniProtKB-EC"/>
</dbReference>
<dbReference type="GO" id="GO:0006397">
    <property type="term" value="P:mRNA processing"/>
    <property type="evidence" value="ECO:0007669"/>
    <property type="project" value="UniProtKB-KW"/>
</dbReference>
<dbReference type="GO" id="GO:0051028">
    <property type="term" value="P:mRNA transport"/>
    <property type="evidence" value="ECO:0007669"/>
    <property type="project" value="UniProtKB-KW"/>
</dbReference>
<dbReference type="GO" id="GO:0006417">
    <property type="term" value="P:regulation of translation"/>
    <property type="evidence" value="ECO:0007669"/>
    <property type="project" value="UniProtKB-KW"/>
</dbReference>
<dbReference type="CDD" id="cd17940">
    <property type="entry name" value="DEADc_DDX6"/>
    <property type="match status" value="1"/>
</dbReference>
<dbReference type="CDD" id="cd18787">
    <property type="entry name" value="SF2_C_DEAD"/>
    <property type="match status" value="1"/>
</dbReference>
<dbReference type="FunFam" id="3.40.50.300:FF:000114">
    <property type="entry name" value="ATP-dependent RNA helicase DDX6"/>
    <property type="match status" value="1"/>
</dbReference>
<dbReference type="FunFam" id="3.40.50.300:FF:000364">
    <property type="entry name" value="ATP-dependent RNA helicase DDX6"/>
    <property type="match status" value="1"/>
</dbReference>
<dbReference type="Gene3D" id="3.40.50.300">
    <property type="entry name" value="P-loop containing nucleotide triphosphate hydrolases"/>
    <property type="match status" value="2"/>
</dbReference>
<dbReference type="InterPro" id="IPR011545">
    <property type="entry name" value="DEAD/DEAH_box_helicase_dom"/>
</dbReference>
<dbReference type="InterPro" id="IPR014001">
    <property type="entry name" value="Helicase_ATP-bd"/>
</dbReference>
<dbReference type="InterPro" id="IPR001650">
    <property type="entry name" value="Helicase_C-like"/>
</dbReference>
<dbReference type="InterPro" id="IPR027417">
    <property type="entry name" value="P-loop_NTPase"/>
</dbReference>
<dbReference type="InterPro" id="IPR000629">
    <property type="entry name" value="RNA-helicase_DEAD-box_CS"/>
</dbReference>
<dbReference type="InterPro" id="IPR014014">
    <property type="entry name" value="RNA_helicase_DEAD_Q_motif"/>
</dbReference>
<dbReference type="PANTHER" id="PTHR47960">
    <property type="entry name" value="DEAD-BOX ATP-DEPENDENT RNA HELICASE 50"/>
    <property type="match status" value="1"/>
</dbReference>
<dbReference type="Pfam" id="PF00270">
    <property type="entry name" value="DEAD"/>
    <property type="match status" value="1"/>
</dbReference>
<dbReference type="Pfam" id="PF00271">
    <property type="entry name" value="Helicase_C"/>
    <property type="match status" value="1"/>
</dbReference>
<dbReference type="SMART" id="SM00487">
    <property type="entry name" value="DEXDc"/>
    <property type="match status" value="1"/>
</dbReference>
<dbReference type="SMART" id="SM00490">
    <property type="entry name" value="HELICc"/>
    <property type="match status" value="1"/>
</dbReference>
<dbReference type="SUPFAM" id="SSF52540">
    <property type="entry name" value="P-loop containing nucleoside triphosphate hydrolases"/>
    <property type="match status" value="1"/>
</dbReference>
<dbReference type="PROSITE" id="PS00039">
    <property type="entry name" value="DEAD_ATP_HELICASE"/>
    <property type="match status" value="1"/>
</dbReference>
<dbReference type="PROSITE" id="PS51192">
    <property type="entry name" value="HELICASE_ATP_BIND_1"/>
    <property type="match status" value="1"/>
</dbReference>
<dbReference type="PROSITE" id="PS51194">
    <property type="entry name" value="HELICASE_CTER"/>
    <property type="match status" value="1"/>
</dbReference>
<dbReference type="PROSITE" id="PS51195">
    <property type="entry name" value="Q_MOTIF"/>
    <property type="match status" value="1"/>
</dbReference>
<reference key="1">
    <citation type="journal article" date="2005" name="Nature">
        <title>The genome sequence of the rice blast fungus Magnaporthe grisea.</title>
        <authorList>
            <person name="Dean R.A."/>
            <person name="Talbot N.J."/>
            <person name="Ebbole D.J."/>
            <person name="Farman M.L."/>
            <person name="Mitchell T.K."/>
            <person name="Orbach M.J."/>
            <person name="Thon M.R."/>
            <person name="Kulkarni R."/>
            <person name="Xu J.-R."/>
            <person name="Pan H."/>
            <person name="Read N.D."/>
            <person name="Lee Y.-H."/>
            <person name="Carbone I."/>
            <person name="Brown D."/>
            <person name="Oh Y.Y."/>
            <person name="Donofrio N."/>
            <person name="Jeong J.S."/>
            <person name="Soanes D.M."/>
            <person name="Djonovic S."/>
            <person name="Kolomiets E."/>
            <person name="Rehmeyer C."/>
            <person name="Li W."/>
            <person name="Harding M."/>
            <person name="Kim S."/>
            <person name="Lebrun M.-H."/>
            <person name="Bohnert H."/>
            <person name="Coughlan S."/>
            <person name="Butler J."/>
            <person name="Calvo S.E."/>
            <person name="Ma L.-J."/>
            <person name="Nicol R."/>
            <person name="Purcell S."/>
            <person name="Nusbaum C."/>
            <person name="Galagan J.E."/>
            <person name="Birren B.W."/>
        </authorList>
    </citation>
    <scope>NUCLEOTIDE SEQUENCE [LARGE SCALE GENOMIC DNA]</scope>
    <source>
        <strain>70-15 / ATCC MYA-4617 / FGSC 8958</strain>
    </source>
</reference>
<name>DHH1_PYRO7</name>
<organism>
    <name type="scientific">Pyricularia oryzae (strain 70-15 / ATCC MYA-4617 / FGSC 8958)</name>
    <name type="common">Rice blast fungus</name>
    <name type="synonym">Magnaporthe oryzae</name>
    <dbReference type="NCBI Taxonomy" id="242507"/>
    <lineage>
        <taxon>Eukaryota</taxon>
        <taxon>Fungi</taxon>
        <taxon>Dikarya</taxon>
        <taxon>Ascomycota</taxon>
        <taxon>Pezizomycotina</taxon>
        <taxon>Sordariomycetes</taxon>
        <taxon>Sordariomycetidae</taxon>
        <taxon>Magnaporthales</taxon>
        <taxon>Pyriculariaceae</taxon>
        <taxon>Pyricularia</taxon>
    </lineage>
</organism>
<feature type="chain" id="PRO_0000294620" description="ATP-dependent RNA helicase DHH1">
    <location>
        <begin position="1"/>
        <end position="535"/>
    </location>
</feature>
<feature type="domain" description="Helicase ATP-binding" evidence="2">
    <location>
        <begin position="78"/>
        <end position="248"/>
    </location>
</feature>
<feature type="domain" description="Helicase C-terminal" evidence="3">
    <location>
        <begin position="258"/>
        <end position="418"/>
    </location>
</feature>
<feature type="region of interest" description="Disordered" evidence="4">
    <location>
        <begin position="429"/>
        <end position="535"/>
    </location>
</feature>
<feature type="short sequence motif" description="Q motif">
    <location>
        <begin position="47"/>
        <end position="75"/>
    </location>
</feature>
<feature type="short sequence motif" description="DEAD box">
    <location>
        <begin position="196"/>
        <end position="199"/>
    </location>
</feature>
<feature type="compositionally biased region" description="Polar residues" evidence="4">
    <location>
        <begin position="464"/>
        <end position="477"/>
    </location>
</feature>
<feature type="compositionally biased region" description="Gly residues" evidence="4">
    <location>
        <begin position="495"/>
        <end position="505"/>
    </location>
</feature>
<feature type="compositionally biased region" description="Low complexity" evidence="4">
    <location>
        <begin position="506"/>
        <end position="515"/>
    </location>
</feature>
<feature type="compositionally biased region" description="Low complexity" evidence="4">
    <location>
        <begin position="523"/>
        <end position="535"/>
    </location>
</feature>
<feature type="binding site" evidence="2">
    <location>
        <begin position="91"/>
        <end position="98"/>
    </location>
    <ligand>
        <name>ATP</name>
        <dbReference type="ChEBI" id="CHEBI:30616"/>
    </ligand>
</feature>